<comment type="function">
    <text evidence="1">Binds 23S rRNA and is also seen to make contacts with the A and possibly P site tRNAs.</text>
</comment>
<comment type="subunit">
    <text evidence="1">Part of the 50S ribosomal subunit.</text>
</comment>
<comment type="similarity">
    <text evidence="1">Belongs to the universal ribosomal protein uL16 family.</text>
</comment>
<protein>
    <recommendedName>
        <fullName evidence="1">Large ribosomal subunit protein uL16</fullName>
    </recommendedName>
    <alternativeName>
        <fullName evidence="2">50S ribosomal protein L16</fullName>
    </alternativeName>
</protein>
<name>RL16_CHLSY</name>
<dbReference type="EMBL" id="CP001364">
    <property type="protein sequence ID" value="ACM53955.1"/>
    <property type="molecule type" value="Genomic_DNA"/>
</dbReference>
<dbReference type="SMR" id="B9LJD9"/>
<dbReference type="KEGG" id="chl:Chy400_2563"/>
<dbReference type="HOGENOM" id="CLU_078858_2_1_0"/>
<dbReference type="OrthoDB" id="9802589at2"/>
<dbReference type="GO" id="GO:0022625">
    <property type="term" value="C:cytosolic large ribosomal subunit"/>
    <property type="evidence" value="ECO:0007669"/>
    <property type="project" value="TreeGrafter"/>
</dbReference>
<dbReference type="GO" id="GO:0019843">
    <property type="term" value="F:rRNA binding"/>
    <property type="evidence" value="ECO:0007669"/>
    <property type="project" value="UniProtKB-UniRule"/>
</dbReference>
<dbReference type="GO" id="GO:0003735">
    <property type="term" value="F:structural constituent of ribosome"/>
    <property type="evidence" value="ECO:0007669"/>
    <property type="project" value="InterPro"/>
</dbReference>
<dbReference type="GO" id="GO:0000049">
    <property type="term" value="F:tRNA binding"/>
    <property type="evidence" value="ECO:0007669"/>
    <property type="project" value="UniProtKB-KW"/>
</dbReference>
<dbReference type="GO" id="GO:0006412">
    <property type="term" value="P:translation"/>
    <property type="evidence" value="ECO:0007669"/>
    <property type="project" value="UniProtKB-UniRule"/>
</dbReference>
<dbReference type="CDD" id="cd01433">
    <property type="entry name" value="Ribosomal_L16_L10e"/>
    <property type="match status" value="1"/>
</dbReference>
<dbReference type="FunFam" id="3.90.1170.10:FF:000001">
    <property type="entry name" value="50S ribosomal protein L16"/>
    <property type="match status" value="1"/>
</dbReference>
<dbReference type="Gene3D" id="3.90.1170.10">
    <property type="entry name" value="Ribosomal protein L10e/L16"/>
    <property type="match status" value="1"/>
</dbReference>
<dbReference type="HAMAP" id="MF_01342">
    <property type="entry name" value="Ribosomal_uL16"/>
    <property type="match status" value="1"/>
</dbReference>
<dbReference type="InterPro" id="IPR047873">
    <property type="entry name" value="Ribosomal_uL16"/>
</dbReference>
<dbReference type="InterPro" id="IPR000114">
    <property type="entry name" value="Ribosomal_uL16_bact-type"/>
</dbReference>
<dbReference type="InterPro" id="IPR020798">
    <property type="entry name" value="Ribosomal_uL16_CS"/>
</dbReference>
<dbReference type="InterPro" id="IPR016180">
    <property type="entry name" value="Ribosomal_uL16_dom"/>
</dbReference>
<dbReference type="InterPro" id="IPR036920">
    <property type="entry name" value="Ribosomal_uL16_sf"/>
</dbReference>
<dbReference type="NCBIfam" id="TIGR01164">
    <property type="entry name" value="rplP_bact"/>
    <property type="match status" value="1"/>
</dbReference>
<dbReference type="PANTHER" id="PTHR12220">
    <property type="entry name" value="50S/60S RIBOSOMAL PROTEIN L16"/>
    <property type="match status" value="1"/>
</dbReference>
<dbReference type="PANTHER" id="PTHR12220:SF13">
    <property type="entry name" value="LARGE RIBOSOMAL SUBUNIT PROTEIN UL16M"/>
    <property type="match status" value="1"/>
</dbReference>
<dbReference type="Pfam" id="PF00252">
    <property type="entry name" value="Ribosomal_L16"/>
    <property type="match status" value="1"/>
</dbReference>
<dbReference type="PRINTS" id="PR00060">
    <property type="entry name" value="RIBOSOMALL16"/>
</dbReference>
<dbReference type="SUPFAM" id="SSF54686">
    <property type="entry name" value="Ribosomal protein L16p/L10e"/>
    <property type="match status" value="1"/>
</dbReference>
<dbReference type="PROSITE" id="PS00586">
    <property type="entry name" value="RIBOSOMAL_L16_1"/>
    <property type="match status" value="1"/>
</dbReference>
<dbReference type="PROSITE" id="PS00701">
    <property type="entry name" value="RIBOSOMAL_L16_2"/>
    <property type="match status" value="1"/>
</dbReference>
<feature type="chain" id="PRO_1000166347" description="Large ribosomal subunit protein uL16">
    <location>
        <begin position="1"/>
        <end position="151"/>
    </location>
</feature>
<organism>
    <name type="scientific">Chloroflexus aurantiacus (strain ATCC 29364 / DSM 637 / Y-400-fl)</name>
    <dbReference type="NCBI Taxonomy" id="480224"/>
    <lineage>
        <taxon>Bacteria</taxon>
        <taxon>Bacillati</taxon>
        <taxon>Chloroflexota</taxon>
        <taxon>Chloroflexia</taxon>
        <taxon>Chloroflexales</taxon>
        <taxon>Chloroflexineae</taxon>
        <taxon>Chloroflexaceae</taxon>
        <taxon>Chloroflexus</taxon>
    </lineage>
</organism>
<reference key="1">
    <citation type="submission" date="2009-01" db="EMBL/GenBank/DDBJ databases">
        <title>Complete sequence of Chloroflexus sp. Y-400-fl.</title>
        <authorList>
            <consortium name="US DOE Joint Genome Institute"/>
            <person name="Lucas S."/>
            <person name="Copeland A."/>
            <person name="Lapidus A."/>
            <person name="Glavina del Rio T."/>
            <person name="Dalin E."/>
            <person name="Tice H."/>
            <person name="Bruce D."/>
            <person name="Goodwin L."/>
            <person name="Pitluck S."/>
            <person name="Sims D."/>
            <person name="Kiss H."/>
            <person name="Brettin T."/>
            <person name="Detter J.C."/>
            <person name="Han C."/>
            <person name="Larimer F."/>
            <person name="Land M."/>
            <person name="Hauser L."/>
            <person name="Kyrpides N."/>
            <person name="Ovchinnikova G."/>
            <person name="Bryant D.A."/>
            <person name="Richardson P."/>
        </authorList>
    </citation>
    <scope>NUCLEOTIDE SEQUENCE [LARGE SCALE GENOMIC DNA]</scope>
    <source>
        <strain>ATCC 29364 / DSM 637 / Y-400-fl</strain>
    </source>
</reference>
<evidence type="ECO:0000255" key="1">
    <source>
        <dbReference type="HAMAP-Rule" id="MF_01342"/>
    </source>
</evidence>
<evidence type="ECO:0000305" key="2"/>
<keyword id="KW-0687">Ribonucleoprotein</keyword>
<keyword id="KW-0689">Ribosomal protein</keyword>
<keyword id="KW-0694">RNA-binding</keyword>
<keyword id="KW-0699">rRNA-binding</keyword>
<keyword id="KW-0820">tRNA-binding</keyword>
<gene>
    <name evidence="1" type="primary">rplP</name>
    <name type="ordered locus">Chy400_2563</name>
</gene>
<accession>B9LJD9</accession>
<proteinExistence type="inferred from homology"/>
<sequence>MLLPKRTKYRKMQKGRSPGLSYRGNNVVFGEYGLMALEPSWISSRQIEAARRAITNYVKRGGKVWIRIFPDKPVTRKPAETRMGGGKGSVDHWVAVVKPGRIMFELAGVREDVAHEALRRAAQKLPIKCKVIDREEQGTMAKPEEVSSESE</sequence>